<gene>
    <name type="primary">PRP5</name>
    <name type="ordered locus">DEHA2F04466g</name>
</gene>
<name>PRP5_DEBHA</name>
<feature type="chain" id="PRO_0000232362" description="Pre-mRNA-processing ATP-dependent RNA helicase PRP5">
    <location>
        <begin position="1"/>
        <end position="913"/>
    </location>
</feature>
<feature type="domain" description="Helicase ATP-binding" evidence="3">
    <location>
        <begin position="348"/>
        <end position="526"/>
    </location>
</feature>
<feature type="domain" description="Helicase C-terminal" evidence="4">
    <location>
        <begin position="564"/>
        <end position="713"/>
    </location>
</feature>
<feature type="region of interest" description="Disordered" evidence="5">
    <location>
        <begin position="1"/>
        <end position="189"/>
    </location>
</feature>
<feature type="region of interest" description="Disordered" evidence="5">
    <location>
        <begin position="209"/>
        <end position="244"/>
    </location>
</feature>
<feature type="region of interest" description="Disordered" evidence="5">
    <location>
        <begin position="755"/>
        <end position="774"/>
    </location>
</feature>
<feature type="coiled-coil region" evidence="2">
    <location>
        <begin position="192"/>
        <end position="265"/>
    </location>
</feature>
<feature type="short sequence motif" description="Q motif">
    <location>
        <begin position="316"/>
        <end position="345"/>
    </location>
</feature>
<feature type="short sequence motif" description="DEAD box">
    <location>
        <begin position="474"/>
        <end position="477"/>
    </location>
</feature>
<feature type="compositionally biased region" description="Polar residues" evidence="5">
    <location>
        <begin position="1"/>
        <end position="30"/>
    </location>
</feature>
<feature type="compositionally biased region" description="Basic and acidic residues" evidence="5">
    <location>
        <begin position="45"/>
        <end position="55"/>
    </location>
</feature>
<feature type="compositionally biased region" description="Polar residues" evidence="5">
    <location>
        <begin position="68"/>
        <end position="82"/>
    </location>
</feature>
<feature type="compositionally biased region" description="Basic and acidic residues" evidence="5">
    <location>
        <begin position="84"/>
        <end position="121"/>
    </location>
</feature>
<feature type="compositionally biased region" description="Basic and acidic residues" evidence="5">
    <location>
        <begin position="178"/>
        <end position="188"/>
    </location>
</feature>
<feature type="compositionally biased region" description="Basic and acidic residues" evidence="5">
    <location>
        <begin position="209"/>
        <end position="219"/>
    </location>
</feature>
<feature type="compositionally biased region" description="Basic and acidic residues" evidence="5">
    <location>
        <begin position="765"/>
        <end position="774"/>
    </location>
</feature>
<feature type="binding site" evidence="3">
    <location>
        <begin position="361"/>
        <end position="368"/>
    </location>
    <ligand>
        <name>ATP</name>
        <dbReference type="ChEBI" id="CHEBI:30616"/>
    </ligand>
</feature>
<evidence type="ECO:0000250" key="1"/>
<evidence type="ECO:0000255" key="2"/>
<evidence type="ECO:0000255" key="3">
    <source>
        <dbReference type="PROSITE-ProRule" id="PRU00541"/>
    </source>
</evidence>
<evidence type="ECO:0000255" key="4">
    <source>
        <dbReference type="PROSITE-ProRule" id="PRU00542"/>
    </source>
</evidence>
<evidence type="ECO:0000256" key="5">
    <source>
        <dbReference type="SAM" id="MobiDB-lite"/>
    </source>
</evidence>
<evidence type="ECO:0000305" key="6"/>
<reference key="1">
    <citation type="journal article" date="2004" name="Nature">
        <title>Genome evolution in yeasts.</title>
        <authorList>
            <person name="Dujon B."/>
            <person name="Sherman D."/>
            <person name="Fischer G."/>
            <person name="Durrens P."/>
            <person name="Casaregola S."/>
            <person name="Lafontaine I."/>
            <person name="de Montigny J."/>
            <person name="Marck C."/>
            <person name="Neuveglise C."/>
            <person name="Talla E."/>
            <person name="Goffard N."/>
            <person name="Frangeul L."/>
            <person name="Aigle M."/>
            <person name="Anthouard V."/>
            <person name="Babour A."/>
            <person name="Barbe V."/>
            <person name="Barnay S."/>
            <person name="Blanchin S."/>
            <person name="Beckerich J.-M."/>
            <person name="Beyne E."/>
            <person name="Bleykasten C."/>
            <person name="Boisrame A."/>
            <person name="Boyer J."/>
            <person name="Cattolico L."/>
            <person name="Confanioleri F."/>
            <person name="de Daruvar A."/>
            <person name="Despons L."/>
            <person name="Fabre E."/>
            <person name="Fairhead C."/>
            <person name="Ferry-Dumazet H."/>
            <person name="Groppi A."/>
            <person name="Hantraye F."/>
            <person name="Hennequin C."/>
            <person name="Jauniaux N."/>
            <person name="Joyet P."/>
            <person name="Kachouri R."/>
            <person name="Kerrest A."/>
            <person name="Koszul R."/>
            <person name="Lemaire M."/>
            <person name="Lesur I."/>
            <person name="Ma L."/>
            <person name="Muller H."/>
            <person name="Nicaud J.-M."/>
            <person name="Nikolski M."/>
            <person name="Oztas S."/>
            <person name="Ozier-Kalogeropoulos O."/>
            <person name="Pellenz S."/>
            <person name="Potier S."/>
            <person name="Richard G.-F."/>
            <person name="Straub M.-L."/>
            <person name="Suleau A."/>
            <person name="Swennen D."/>
            <person name="Tekaia F."/>
            <person name="Wesolowski-Louvel M."/>
            <person name="Westhof E."/>
            <person name="Wirth B."/>
            <person name="Zeniou-Meyer M."/>
            <person name="Zivanovic Y."/>
            <person name="Bolotin-Fukuhara M."/>
            <person name="Thierry A."/>
            <person name="Bouchier C."/>
            <person name="Caudron B."/>
            <person name="Scarpelli C."/>
            <person name="Gaillardin C."/>
            <person name="Weissenbach J."/>
            <person name="Wincker P."/>
            <person name="Souciet J.-L."/>
        </authorList>
    </citation>
    <scope>NUCLEOTIDE SEQUENCE [LARGE SCALE GENOMIC DNA]</scope>
    <source>
        <strain>ATCC 36239 / CBS 767 / BCRC 21394 / JCM 1990 / NBRC 0083 / IGC 2968</strain>
    </source>
</reference>
<proteinExistence type="inferred from homology"/>
<organism>
    <name type="scientific">Debaryomyces hansenii (strain ATCC 36239 / CBS 767 / BCRC 21394 / JCM 1990 / NBRC 0083 / IGC 2968)</name>
    <name type="common">Yeast</name>
    <name type="synonym">Torulaspora hansenii</name>
    <dbReference type="NCBI Taxonomy" id="284592"/>
    <lineage>
        <taxon>Eukaryota</taxon>
        <taxon>Fungi</taxon>
        <taxon>Dikarya</taxon>
        <taxon>Ascomycota</taxon>
        <taxon>Saccharomycotina</taxon>
        <taxon>Pichiomycetes</taxon>
        <taxon>Debaryomycetaceae</taxon>
        <taxon>Debaryomyces</taxon>
    </lineage>
</organism>
<comment type="function">
    <text evidence="1">ATP-dependent RNA helicase involved spliceosome assembly and in nuclear splicing. Catalyzes an ATP-dependent conformational change of U2 snRNP. Bridges U1 and U2 snRNPs and enables stable U2 snRNP association with intron RNA (By similarity).</text>
</comment>
<comment type="catalytic activity">
    <reaction>
        <text>ATP + H2O = ADP + phosphate + H(+)</text>
        <dbReference type="Rhea" id="RHEA:13065"/>
        <dbReference type="ChEBI" id="CHEBI:15377"/>
        <dbReference type="ChEBI" id="CHEBI:15378"/>
        <dbReference type="ChEBI" id="CHEBI:30616"/>
        <dbReference type="ChEBI" id="CHEBI:43474"/>
        <dbReference type="ChEBI" id="CHEBI:456216"/>
        <dbReference type="EC" id="3.6.4.13"/>
    </reaction>
</comment>
<comment type="subcellular location">
    <subcellularLocation>
        <location evidence="1">Nucleus</location>
    </subcellularLocation>
</comment>
<comment type="domain">
    <text>The Q motif is unique to and characteristic of the DEAD box family of RNA helicases and controls ATP binding and hydrolysis.</text>
</comment>
<comment type="similarity">
    <text evidence="6">Belongs to the DEAD box helicase family. DDX46/PRP5 subfamily.</text>
</comment>
<accession>Q6BML1</accession>
<accession>B5RU90</accession>
<keyword id="KW-0067">ATP-binding</keyword>
<keyword id="KW-0175">Coiled coil</keyword>
<keyword id="KW-0347">Helicase</keyword>
<keyword id="KW-0378">Hydrolase</keyword>
<keyword id="KW-0507">mRNA processing</keyword>
<keyword id="KW-0508">mRNA splicing</keyword>
<keyword id="KW-0547">Nucleotide-binding</keyword>
<keyword id="KW-0539">Nucleus</keyword>
<keyword id="KW-1185">Reference proteome</keyword>
<protein>
    <recommendedName>
        <fullName>Pre-mRNA-processing ATP-dependent RNA helicase PRP5</fullName>
        <ecNumber>3.6.4.13</ecNumber>
    </recommendedName>
</protein>
<sequence>MNSTGSNYSLKHNNTQDNNHNSEESVTNKTGELDKPGVKDGQALSKEEKLKRRQEQLAAWMQKRQQENQEPSGKVTISATDETNIDKEKLIRQQRIEEWKRKRLQKSEGLETDRSKIKTFEVKSSNEPTIKINASMKKTITPANGRSKKRPIFGDEDEDDEKESKPKFKKPTLDLAEIEEKKPEKSIDTEIDELDKYLSLLEEKEQGVENKKIENHDDDGIANGPGVGNVNESDDEEIDEDQKQQDILSSKLNRLQNKQKQLDDVDHNQIQYHPFRKDFYTEPTEISKLPEEEVANLRLKLDGIKVRGVNCTRPIIRWSQLGLPSTIMSIIEGRLNYSSPSSIQAQAIPAIMSGRDIIGVAKTGSGKTLSFVLPLLRHIQDQPPLKKGDGPIGLIMTPTRELALQIHKELNHFTKKLNISSCCCFGGSSIESQIAELKKGAQIIVGTPGRIIDLLAANSGRVTNLQRVTYLVLDEADRMFDMGFEPQVTKVFTRVRPDRQTVLFSATFPRKMELLAKKILDNPMEIVVGGISVVASEITQKVELFENEDDKSLEEAKFSKLLSTLNDYGDKDAECKILIFVEKQIAADELLVKLLTEKYPCLAIHGGKDQIDRKHAIREFSSSNSGVNILIATSIAARGLDVKGLNLVINYEAASHMEDYVHRVGRTGRAGRKGTAITFVSSKQGRAITDLVKAMRLSKVSEDEINPRLIEISTKFLEGVKSGKEKYNFGFSGKGLDNLQEIRESNRDLERKVYGEENDSSTFKANEKKQNKTDIHQSDLDVKLPDFHIIEGRAPETAGPDKCKFHSRITINDLPQKARWITVNRDSLSKVIESTGTSITNKGNYYPPNSKIPKTIKQNGKEVTPPPKLYLLVEGLTEKAVHDAIILLREKMIEGLEVAAKEESMGPTGKYTV</sequence>
<dbReference type="EC" id="3.6.4.13"/>
<dbReference type="EMBL" id="CR382138">
    <property type="protein sequence ID" value="CAR66268.1"/>
    <property type="molecule type" value="Genomic_DNA"/>
</dbReference>
<dbReference type="RefSeq" id="XP_002770738.1">
    <property type="nucleotide sequence ID" value="XM_002770692.1"/>
</dbReference>
<dbReference type="SMR" id="Q6BML1"/>
<dbReference type="FunCoup" id="Q6BML1">
    <property type="interactions" value="1108"/>
</dbReference>
<dbReference type="STRING" id="284592.Q6BML1"/>
<dbReference type="GeneID" id="8998872"/>
<dbReference type="KEGG" id="dha:DEHA2F04466g"/>
<dbReference type="VEuPathDB" id="FungiDB:DEHA2F04466g"/>
<dbReference type="eggNOG" id="KOG0334">
    <property type="taxonomic scope" value="Eukaryota"/>
</dbReference>
<dbReference type="HOGENOM" id="CLU_003041_0_2_1"/>
<dbReference type="InParanoid" id="Q6BML1"/>
<dbReference type="OMA" id="FAQYVHT"/>
<dbReference type="OrthoDB" id="196131at2759"/>
<dbReference type="Proteomes" id="UP000000599">
    <property type="component" value="Chromosome F"/>
</dbReference>
<dbReference type="GO" id="GO:0005634">
    <property type="term" value="C:nucleus"/>
    <property type="evidence" value="ECO:0007669"/>
    <property type="project" value="UniProtKB-SubCell"/>
</dbReference>
<dbReference type="GO" id="GO:0005524">
    <property type="term" value="F:ATP binding"/>
    <property type="evidence" value="ECO:0007669"/>
    <property type="project" value="UniProtKB-KW"/>
</dbReference>
<dbReference type="GO" id="GO:0016887">
    <property type="term" value="F:ATP hydrolysis activity"/>
    <property type="evidence" value="ECO:0007669"/>
    <property type="project" value="RHEA"/>
</dbReference>
<dbReference type="GO" id="GO:0003676">
    <property type="term" value="F:nucleic acid binding"/>
    <property type="evidence" value="ECO:0007669"/>
    <property type="project" value="InterPro"/>
</dbReference>
<dbReference type="GO" id="GO:0003724">
    <property type="term" value="F:RNA helicase activity"/>
    <property type="evidence" value="ECO:0007669"/>
    <property type="project" value="UniProtKB-EC"/>
</dbReference>
<dbReference type="GO" id="GO:0006397">
    <property type="term" value="P:mRNA processing"/>
    <property type="evidence" value="ECO:0007669"/>
    <property type="project" value="UniProtKB-KW"/>
</dbReference>
<dbReference type="GO" id="GO:0008380">
    <property type="term" value="P:RNA splicing"/>
    <property type="evidence" value="ECO:0007669"/>
    <property type="project" value="UniProtKB-KW"/>
</dbReference>
<dbReference type="CDD" id="cd17953">
    <property type="entry name" value="DEADc_DDX46"/>
    <property type="match status" value="1"/>
</dbReference>
<dbReference type="CDD" id="cd22474">
    <property type="entry name" value="KH-I_PRP5_like"/>
    <property type="match status" value="1"/>
</dbReference>
<dbReference type="CDD" id="cd18787">
    <property type="entry name" value="SF2_C_DEAD"/>
    <property type="match status" value="1"/>
</dbReference>
<dbReference type="FunFam" id="3.40.50.300:FF:000079">
    <property type="entry name" value="probable ATP-dependent RNA helicase DDX17"/>
    <property type="match status" value="1"/>
</dbReference>
<dbReference type="Gene3D" id="3.40.50.300">
    <property type="entry name" value="P-loop containing nucleotide triphosphate hydrolases"/>
    <property type="match status" value="2"/>
</dbReference>
<dbReference type="InterPro" id="IPR011545">
    <property type="entry name" value="DEAD/DEAH_box_helicase_dom"/>
</dbReference>
<dbReference type="InterPro" id="IPR014001">
    <property type="entry name" value="Helicase_ATP-bd"/>
</dbReference>
<dbReference type="InterPro" id="IPR001650">
    <property type="entry name" value="Helicase_C-like"/>
</dbReference>
<dbReference type="InterPro" id="IPR027417">
    <property type="entry name" value="P-loop_NTPase"/>
</dbReference>
<dbReference type="InterPro" id="IPR000629">
    <property type="entry name" value="RNA-helicase_DEAD-box_CS"/>
</dbReference>
<dbReference type="InterPro" id="IPR014014">
    <property type="entry name" value="RNA_helicase_DEAD_Q_motif"/>
</dbReference>
<dbReference type="PANTHER" id="PTHR47958">
    <property type="entry name" value="ATP-DEPENDENT RNA HELICASE DBP3"/>
    <property type="match status" value="1"/>
</dbReference>
<dbReference type="Pfam" id="PF00270">
    <property type="entry name" value="DEAD"/>
    <property type="match status" value="1"/>
</dbReference>
<dbReference type="Pfam" id="PF00271">
    <property type="entry name" value="Helicase_C"/>
    <property type="match status" value="1"/>
</dbReference>
<dbReference type="SMART" id="SM00487">
    <property type="entry name" value="DEXDc"/>
    <property type="match status" value="1"/>
</dbReference>
<dbReference type="SMART" id="SM00490">
    <property type="entry name" value="HELICc"/>
    <property type="match status" value="1"/>
</dbReference>
<dbReference type="SUPFAM" id="SSF52540">
    <property type="entry name" value="P-loop containing nucleoside triphosphate hydrolases"/>
    <property type="match status" value="2"/>
</dbReference>
<dbReference type="PROSITE" id="PS00039">
    <property type="entry name" value="DEAD_ATP_HELICASE"/>
    <property type="match status" value="1"/>
</dbReference>
<dbReference type="PROSITE" id="PS51192">
    <property type="entry name" value="HELICASE_ATP_BIND_1"/>
    <property type="match status" value="1"/>
</dbReference>
<dbReference type="PROSITE" id="PS51194">
    <property type="entry name" value="HELICASE_CTER"/>
    <property type="match status" value="1"/>
</dbReference>
<dbReference type="PROSITE" id="PS51195">
    <property type="entry name" value="Q_MOTIF"/>
    <property type="match status" value="1"/>
</dbReference>